<proteinExistence type="evidence at transcript level"/>
<gene>
    <name type="primary">SMAP</name>
</gene>
<feature type="chain" id="PRO_0000263659" description="Small acidic protein">
    <location>
        <begin position="1"/>
        <end position="172"/>
    </location>
</feature>
<feature type="region of interest" description="Disordered" evidence="1">
    <location>
        <begin position="1"/>
        <end position="160"/>
    </location>
</feature>
<feature type="compositionally biased region" description="Basic and acidic residues" evidence="1">
    <location>
        <begin position="46"/>
        <end position="76"/>
    </location>
</feature>
<feature type="compositionally biased region" description="Polar residues" evidence="1">
    <location>
        <begin position="80"/>
        <end position="92"/>
    </location>
</feature>
<feature type="compositionally biased region" description="Basic and acidic residues" evidence="1">
    <location>
        <begin position="112"/>
        <end position="122"/>
    </location>
</feature>
<feature type="compositionally biased region" description="Basic and acidic residues" evidence="1">
    <location>
        <begin position="144"/>
        <end position="160"/>
    </location>
</feature>
<dbReference type="EMBL" id="AF245016">
    <property type="protein sequence ID" value="AAF63335.1"/>
    <property type="molecule type" value="mRNA"/>
</dbReference>
<dbReference type="RefSeq" id="NP_990089.1">
    <property type="nucleotide sequence ID" value="NM_204758.1"/>
</dbReference>
<dbReference type="FunCoup" id="Q9I9J6">
    <property type="interactions" value="2085"/>
</dbReference>
<dbReference type="STRING" id="9031.ENSGALP00000009795"/>
<dbReference type="PaxDb" id="9031-ENSGALP00000009795"/>
<dbReference type="GeneID" id="395520"/>
<dbReference type="KEGG" id="gga:395520"/>
<dbReference type="CTD" id="10944"/>
<dbReference type="VEuPathDB" id="HostDB:geneid_395520"/>
<dbReference type="eggNOG" id="ENOG502RXI1">
    <property type="taxonomic scope" value="Eukaryota"/>
</dbReference>
<dbReference type="InParanoid" id="Q9I9J6"/>
<dbReference type="OrthoDB" id="10066125at2759"/>
<dbReference type="PhylomeDB" id="Q9I9J6"/>
<dbReference type="PRO" id="PR:Q9I9J6"/>
<dbReference type="Proteomes" id="UP000000539">
    <property type="component" value="Unassembled WGS sequence"/>
</dbReference>
<dbReference type="InterPro" id="IPR026714">
    <property type="entry name" value="SMAP"/>
</dbReference>
<dbReference type="InterPro" id="IPR028124">
    <property type="entry name" value="SMAP_dom"/>
</dbReference>
<dbReference type="PANTHER" id="PTHR22175:SF0">
    <property type="entry name" value="SMALL ACIDIC PROTEIN"/>
    <property type="match status" value="1"/>
</dbReference>
<dbReference type="PANTHER" id="PTHR22175">
    <property type="entry name" value="SMALL ACIDIC PROTEIN-RELATED"/>
    <property type="match status" value="1"/>
</dbReference>
<dbReference type="Pfam" id="PF15477">
    <property type="entry name" value="SMAP"/>
    <property type="match status" value="1"/>
</dbReference>
<comment type="tissue specificity">
    <text evidence="2">Expressed in brain, heart, eye, liver, kidney and skeletal muscle.</text>
</comment>
<comment type="developmental stage">
    <text evidence="2">Expressed in embryos at 2, 4 and 6 dpc.</text>
</comment>
<comment type="similarity">
    <text evidence="3">Belongs to the SMAP family.</text>
</comment>
<keyword id="KW-1185">Reference proteome</keyword>
<evidence type="ECO:0000256" key="1">
    <source>
        <dbReference type="SAM" id="MobiDB-lite"/>
    </source>
</evidence>
<evidence type="ECO:0000269" key="2">
    <source>
    </source>
</evidence>
<evidence type="ECO:0000305" key="3"/>
<protein>
    <recommendedName>
        <fullName>Small acidic protein</fullName>
    </recommendedName>
</protein>
<sequence>MSSARESQARHGLKRAASPDGSGSWQAADLGNEERKQKFLRLMGAGKKEHTGRLVIGDHRSTSHFRTGEEDKKMNEELESQYQQSMDSTMSGRNRRHCGLGFSEFQEGEEEAAGHSSDHESSEDSESGSDSKQDESAEELQAAETHDEAAVPETKKEAKSNYKMMFVKASGS</sequence>
<organism>
    <name type="scientific">Gallus gallus</name>
    <name type="common">Chicken</name>
    <dbReference type="NCBI Taxonomy" id="9031"/>
    <lineage>
        <taxon>Eukaryota</taxon>
        <taxon>Metazoa</taxon>
        <taxon>Chordata</taxon>
        <taxon>Craniata</taxon>
        <taxon>Vertebrata</taxon>
        <taxon>Euteleostomi</taxon>
        <taxon>Archelosauria</taxon>
        <taxon>Archosauria</taxon>
        <taxon>Dinosauria</taxon>
        <taxon>Saurischia</taxon>
        <taxon>Theropoda</taxon>
        <taxon>Coelurosauria</taxon>
        <taxon>Aves</taxon>
        <taxon>Neognathae</taxon>
        <taxon>Galloanserae</taxon>
        <taxon>Galliformes</taxon>
        <taxon>Phasianidae</taxon>
        <taxon>Phasianinae</taxon>
        <taxon>Gallus</taxon>
    </lineage>
</organism>
<reference key="1">
    <citation type="submission" date="2000-03" db="EMBL/GenBank/DDBJ databases">
        <title>Identification of a small acidic protein downregulated during chondrocyte hypertrophy.</title>
        <authorList>
            <person name="Webster S.V."/>
            <person name="Kwan A.P.L."/>
        </authorList>
    </citation>
    <scope>NUCLEOTIDE SEQUENCE [MRNA]</scope>
</reference>
<reference key="2">
    <citation type="journal article" date="1997" name="Int. J. Dev. Neurosci.">
        <title>Novel genes expressed in the chick otocyst during development: identification using differential display of RNA.</title>
        <authorList>
            <person name="Gong T.-W."/>
            <person name="Hegeman A.D."/>
            <person name="Shin J.J."/>
            <person name="Lindberg K.H."/>
            <person name="Barald K.F."/>
            <person name="Lomax M.I."/>
        </authorList>
    </citation>
    <scope>DEVELOPMENTAL STAGE</scope>
    <scope>TISSUE SPECIFICITY</scope>
    <source>
        <tissue>Embryonic head</tissue>
    </source>
</reference>
<name>SMAP_CHICK</name>
<accession>Q9I9J6</accession>